<comment type="catalytic activity">
    <reaction evidence="1">
        <text>tRNA(Cys) + L-cysteine + ATP = L-cysteinyl-tRNA(Cys) + AMP + diphosphate</text>
        <dbReference type="Rhea" id="RHEA:17773"/>
        <dbReference type="Rhea" id="RHEA-COMP:9661"/>
        <dbReference type="Rhea" id="RHEA-COMP:9679"/>
        <dbReference type="ChEBI" id="CHEBI:30616"/>
        <dbReference type="ChEBI" id="CHEBI:33019"/>
        <dbReference type="ChEBI" id="CHEBI:35235"/>
        <dbReference type="ChEBI" id="CHEBI:78442"/>
        <dbReference type="ChEBI" id="CHEBI:78517"/>
        <dbReference type="ChEBI" id="CHEBI:456215"/>
        <dbReference type="EC" id="6.1.1.16"/>
    </reaction>
</comment>
<comment type="cofactor">
    <cofactor evidence="1">
        <name>Zn(2+)</name>
        <dbReference type="ChEBI" id="CHEBI:29105"/>
    </cofactor>
    <text evidence="1">Binds 1 zinc ion per subunit.</text>
</comment>
<comment type="subunit">
    <text evidence="1">Monomer.</text>
</comment>
<comment type="subcellular location">
    <subcellularLocation>
        <location evidence="1">Cytoplasm</location>
    </subcellularLocation>
</comment>
<comment type="similarity">
    <text evidence="1">Belongs to the class-I aminoacyl-tRNA synthetase family.</text>
</comment>
<comment type="sequence caution" evidence="2">
    <conflict type="erroneous initiation">
        <sequence resource="EMBL-CDS" id="AAX51062"/>
    </conflict>
</comment>
<organism>
    <name type="scientific">Chlamydia trachomatis serovar A (strain ATCC VR-571B / DSM 19440 / HAR-13)</name>
    <dbReference type="NCBI Taxonomy" id="315277"/>
    <lineage>
        <taxon>Bacteria</taxon>
        <taxon>Pseudomonadati</taxon>
        <taxon>Chlamydiota</taxon>
        <taxon>Chlamydiia</taxon>
        <taxon>Chlamydiales</taxon>
        <taxon>Chlamydiaceae</taxon>
        <taxon>Chlamydia/Chlamydophila group</taxon>
        <taxon>Chlamydia</taxon>
    </lineage>
</organism>
<protein>
    <recommendedName>
        <fullName evidence="1">Cysteine--tRNA ligase</fullName>
        <ecNumber evidence="1">6.1.1.16</ecNumber>
    </recommendedName>
    <alternativeName>
        <fullName evidence="1">Cysteinyl-tRNA synthetase</fullName>
        <shortName evidence="1">CysRS</shortName>
    </alternativeName>
</protein>
<gene>
    <name evidence="1" type="primary">cysS</name>
    <name type="ordered locus">CTA_0852</name>
</gene>
<proteinExistence type="inferred from homology"/>
<sequence>MDLFLYNTLSREKERFLPVNDPVKLYTCGPTVYDYAHIGNFRTYIFEDLLKRVLLFLGYSVYHVMNITDVDDKTLAGARKKGCSLEKYCQPYIHAFFADLETLHILKADAYPHATHYIPQMIEAIQQLINQGVAYIGQDQSVYFSISQFPNYGALSHLNLEELRNSARIDADEYDKDNLCDFVLWKAYDPDRDGEIFWESPFGKGRPGWHLECSIMSISLLGQSLDIHAGGVDNIFPHHENEIAQSESLSHKPFVRYWLHSHHLLVDRKKMSKSLGNFFTLRDLLDQGFSGEEVRYLLLQGHYRTQLNFTQEGLHASRQSLKRLRDFICRLEDPSYPDDIIHPEVATACQSFLETFITSLTNDLNISSSLAALFDFIRKINSSIDQHTGIQTETDSSVFSKQDAQHILALLRKIDQVLGVLPFSQPDIPEEVLLLVEQREAARKVKNWQEADRLRDEILSRGFAIEDGKTGMKVKKL</sequence>
<reference key="1">
    <citation type="journal article" date="2005" name="Infect. Immun.">
        <title>Comparative genomic analysis of Chlamydia trachomatis oculotropic and genitotropic strains.</title>
        <authorList>
            <person name="Carlson J.H."/>
            <person name="Porcella S.F."/>
            <person name="McClarty G."/>
            <person name="Caldwell H.D."/>
        </authorList>
    </citation>
    <scope>NUCLEOTIDE SEQUENCE [LARGE SCALE GENOMIC DNA]</scope>
    <source>
        <strain>ATCC VR-571B / DSM 19440 / HAR-13</strain>
    </source>
</reference>
<keyword id="KW-0030">Aminoacyl-tRNA synthetase</keyword>
<keyword id="KW-0067">ATP-binding</keyword>
<keyword id="KW-0963">Cytoplasm</keyword>
<keyword id="KW-0436">Ligase</keyword>
<keyword id="KW-0479">Metal-binding</keyword>
<keyword id="KW-0547">Nucleotide-binding</keyword>
<keyword id="KW-0648">Protein biosynthesis</keyword>
<keyword id="KW-0862">Zinc</keyword>
<dbReference type="EC" id="6.1.1.16" evidence="1"/>
<dbReference type="EMBL" id="CP000051">
    <property type="protein sequence ID" value="AAX51062.1"/>
    <property type="status" value="ALT_INIT"/>
    <property type="molecule type" value="Genomic_DNA"/>
</dbReference>
<dbReference type="SMR" id="Q3KKR0"/>
<dbReference type="KEGG" id="cta:CTA_0852"/>
<dbReference type="HOGENOM" id="CLU_013528_0_1_0"/>
<dbReference type="Proteomes" id="UP000002532">
    <property type="component" value="Chromosome"/>
</dbReference>
<dbReference type="GO" id="GO:0005829">
    <property type="term" value="C:cytosol"/>
    <property type="evidence" value="ECO:0007669"/>
    <property type="project" value="TreeGrafter"/>
</dbReference>
<dbReference type="GO" id="GO:0005524">
    <property type="term" value="F:ATP binding"/>
    <property type="evidence" value="ECO:0007669"/>
    <property type="project" value="UniProtKB-UniRule"/>
</dbReference>
<dbReference type="GO" id="GO:0004817">
    <property type="term" value="F:cysteine-tRNA ligase activity"/>
    <property type="evidence" value="ECO:0007669"/>
    <property type="project" value="UniProtKB-UniRule"/>
</dbReference>
<dbReference type="GO" id="GO:0008270">
    <property type="term" value="F:zinc ion binding"/>
    <property type="evidence" value="ECO:0007669"/>
    <property type="project" value="UniProtKB-UniRule"/>
</dbReference>
<dbReference type="GO" id="GO:0006423">
    <property type="term" value="P:cysteinyl-tRNA aminoacylation"/>
    <property type="evidence" value="ECO:0007669"/>
    <property type="project" value="UniProtKB-UniRule"/>
</dbReference>
<dbReference type="CDD" id="cd00672">
    <property type="entry name" value="CysRS_core"/>
    <property type="match status" value="1"/>
</dbReference>
<dbReference type="FunFam" id="1.20.120.1910:FF:000018">
    <property type="entry name" value="Cysteine--tRNA ligase"/>
    <property type="match status" value="1"/>
</dbReference>
<dbReference type="FunFam" id="3.40.50.620:FF:000130">
    <property type="entry name" value="Cysteine--tRNA ligase"/>
    <property type="match status" value="1"/>
</dbReference>
<dbReference type="Gene3D" id="1.20.120.1910">
    <property type="entry name" value="Cysteine-tRNA ligase, C-terminal anti-codon recognition domain"/>
    <property type="match status" value="1"/>
</dbReference>
<dbReference type="Gene3D" id="3.40.50.620">
    <property type="entry name" value="HUPs"/>
    <property type="match status" value="1"/>
</dbReference>
<dbReference type="HAMAP" id="MF_00041">
    <property type="entry name" value="Cys_tRNA_synth"/>
    <property type="match status" value="1"/>
</dbReference>
<dbReference type="InterPro" id="IPR015803">
    <property type="entry name" value="Cys-tRNA-ligase"/>
</dbReference>
<dbReference type="InterPro" id="IPR015273">
    <property type="entry name" value="Cys-tRNA-synt_Ia_DALR"/>
</dbReference>
<dbReference type="InterPro" id="IPR024909">
    <property type="entry name" value="Cys-tRNA/MSH_ligase"/>
</dbReference>
<dbReference type="InterPro" id="IPR056411">
    <property type="entry name" value="CysS_C"/>
</dbReference>
<dbReference type="InterPro" id="IPR014729">
    <property type="entry name" value="Rossmann-like_a/b/a_fold"/>
</dbReference>
<dbReference type="InterPro" id="IPR032678">
    <property type="entry name" value="tRNA-synt_1_cat_dom"/>
</dbReference>
<dbReference type="InterPro" id="IPR009080">
    <property type="entry name" value="tRNAsynth_Ia_anticodon-bd"/>
</dbReference>
<dbReference type="NCBIfam" id="TIGR00435">
    <property type="entry name" value="cysS"/>
    <property type="match status" value="1"/>
</dbReference>
<dbReference type="PANTHER" id="PTHR10890:SF3">
    <property type="entry name" value="CYSTEINE--TRNA LIGASE, CYTOPLASMIC"/>
    <property type="match status" value="1"/>
</dbReference>
<dbReference type="PANTHER" id="PTHR10890">
    <property type="entry name" value="CYSTEINYL-TRNA SYNTHETASE"/>
    <property type="match status" value="1"/>
</dbReference>
<dbReference type="Pfam" id="PF23493">
    <property type="entry name" value="CysS_C"/>
    <property type="match status" value="1"/>
</dbReference>
<dbReference type="Pfam" id="PF09190">
    <property type="entry name" value="DALR_2"/>
    <property type="match status" value="1"/>
</dbReference>
<dbReference type="Pfam" id="PF01406">
    <property type="entry name" value="tRNA-synt_1e"/>
    <property type="match status" value="1"/>
</dbReference>
<dbReference type="PRINTS" id="PR00983">
    <property type="entry name" value="TRNASYNTHCYS"/>
</dbReference>
<dbReference type="SMART" id="SM00840">
    <property type="entry name" value="DALR_2"/>
    <property type="match status" value="1"/>
</dbReference>
<dbReference type="SUPFAM" id="SSF47323">
    <property type="entry name" value="Anticodon-binding domain of a subclass of class I aminoacyl-tRNA synthetases"/>
    <property type="match status" value="1"/>
</dbReference>
<dbReference type="SUPFAM" id="SSF52374">
    <property type="entry name" value="Nucleotidylyl transferase"/>
    <property type="match status" value="1"/>
</dbReference>
<evidence type="ECO:0000255" key="1">
    <source>
        <dbReference type="HAMAP-Rule" id="MF_00041"/>
    </source>
</evidence>
<evidence type="ECO:0000305" key="2"/>
<name>SYC_CHLTA</name>
<accession>Q3KKR0</accession>
<feature type="chain" id="PRO_0000240900" description="Cysteine--tRNA ligase">
    <location>
        <begin position="1"/>
        <end position="477"/>
    </location>
</feature>
<feature type="short sequence motif" description="'HIGH' region">
    <location>
        <begin position="30"/>
        <end position="40"/>
    </location>
</feature>
<feature type="short sequence motif" description="'KMSKS' region">
    <location>
        <begin position="270"/>
        <end position="274"/>
    </location>
</feature>
<feature type="binding site" evidence="1">
    <location>
        <position position="28"/>
    </location>
    <ligand>
        <name>Zn(2+)</name>
        <dbReference type="ChEBI" id="CHEBI:29105"/>
    </ligand>
</feature>
<feature type="binding site" evidence="1">
    <location>
        <position position="213"/>
    </location>
    <ligand>
        <name>Zn(2+)</name>
        <dbReference type="ChEBI" id="CHEBI:29105"/>
    </ligand>
</feature>
<feature type="binding site" evidence="1">
    <location>
        <position position="238"/>
    </location>
    <ligand>
        <name>Zn(2+)</name>
        <dbReference type="ChEBI" id="CHEBI:29105"/>
    </ligand>
</feature>
<feature type="binding site" evidence="1">
    <location>
        <position position="242"/>
    </location>
    <ligand>
        <name>Zn(2+)</name>
        <dbReference type="ChEBI" id="CHEBI:29105"/>
    </ligand>
</feature>
<feature type="binding site" evidence="1">
    <location>
        <position position="273"/>
    </location>
    <ligand>
        <name>ATP</name>
        <dbReference type="ChEBI" id="CHEBI:30616"/>
    </ligand>
</feature>